<feature type="chain" id="PRO_0000290713" description="Undecaprenyl-diphosphatase">
    <location>
        <begin position="1"/>
        <end position="295"/>
    </location>
</feature>
<feature type="transmembrane region" description="Helical" evidence="1">
    <location>
        <begin position="12"/>
        <end position="34"/>
    </location>
</feature>
<feature type="transmembrane region" description="Helical" evidence="1">
    <location>
        <begin position="50"/>
        <end position="70"/>
    </location>
</feature>
<feature type="transmembrane region" description="Helical" evidence="1">
    <location>
        <begin position="95"/>
        <end position="115"/>
    </location>
</feature>
<feature type="transmembrane region" description="Helical" evidence="1">
    <location>
        <begin position="120"/>
        <end position="140"/>
    </location>
</feature>
<feature type="transmembrane region" description="Helical" evidence="1">
    <location>
        <begin position="209"/>
        <end position="229"/>
    </location>
</feature>
<feature type="transmembrane region" description="Helical" evidence="1">
    <location>
        <begin position="243"/>
        <end position="263"/>
    </location>
</feature>
<feature type="transmembrane region" description="Helical" evidence="1">
    <location>
        <begin position="272"/>
        <end position="292"/>
    </location>
</feature>
<dbReference type="EC" id="3.6.1.27" evidence="1"/>
<dbReference type="EMBL" id="CP000394">
    <property type="protein sequence ID" value="ABI61769.1"/>
    <property type="molecule type" value="Genomic_DNA"/>
</dbReference>
<dbReference type="SMR" id="Q0BTT3"/>
<dbReference type="STRING" id="391165.GbCGDNIH1_0871"/>
<dbReference type="KEGG" id="gbe:GbCGDNIH1_0871"/>
<dbReference type="eggNOG" id="COG1968">
    <property type="taxonomic scope" value="Bacteria"/>
</dbReference>
<dbReference type="HOGENOM" id="CLU_060296_1_1_5"/>
<dbReference type="Proteomes" id="UP000001963">
    <property type="component" value="Chromosome"/>
</dbReference>
<dbReference type="GO" id="GO:0005886">
    <property type="term" value="C:plasma membrane"/>
    <property type="evidence" value="ECO:0007669"/>
    <property type="project" value="UniProtKB-SubCell"/>
</dbReference>
<dbReference type="GO" id="GO:0050380">
    <property type="term" value="F:undecaprenyl-diphosphatase activity"/>
    <property type="evidence" value="ECO:0007669"/>
    <property type="project" value="UniProtKB-UniRule"/>
</dbReference>
<dbReference type="GO" id="GO:0071555">
    <property type="term" value="P:cell wall organization"/>
    <property type="evidence" value="ECO:0007669"/>
    <property type="project" value="UniProtKB-KW"/>
</dbReference>
<dbReference type="GO" id="GO:0009252">
    <property type="term" value="P:peptidoglycan biosynthetic process"/>
    <property type="evidence" value="ECO:0007669"/>
    <property type="project" value="UniProtKB-KW"/>
</dbReference>
<dbReference type="GO" id="GO:0008360">
    <property type="term" value="P:regulation of cell shape"/>
    <property type="evidence" value="ECO:0007669"/>
    <property type="project" value="UniProtKB-KW"/>
</dbReference>
<dbReference type="GO" id="GO:0046677">
    <property type="term" value="P:response to antibiotic"/>
    <property type="evidence" value="ECO:0007669"/>
    <property type="project" value="UniProtKB-UniRule"/>
</dbReference>
<dbReference type="HAMAP" id="MF_01006">
    <property type="entry name" value="Undec_diphosphatase"/>
    <property type="match status" value="1"/>
</dbReference>
<dbReference type="InterPro" id="IPR003824">
    <property type="entry name" value="UppP"/>
</dbReference>
<dbReference type="NCBIfam" id="NF001397">
    <property type="entry name" value="PRK00281.3-4"/>
    <property type="match status" value="1"/>
</dbReference>
<dbReference type="PANTHER" id="PTHR30622">
    <property type="entry name" value="UNDECAPRENYL-DIPHOSPHATASE"/>
    <property type="match status" value="1"/>
</dbReference>
<dbReference type="PANTHER" id="PTHR30622:SF4">
    <property type="entry name" value="UNDECAPRENYL-DIPHOSPHATASE"/>
    <property type="match status" value="1"/>
</dbReference>
<dbReference type="Pfam" id="PF02673">
    <property type="entry name" value="BacA"/>
    <property type="match status" value="1"/>
</dbReference>
<sequence>MRIESMNAIQAIAIAILQGATELFPVSSLGHAVVLPALLGWSLPQHSQTFLPFLVFLHLGTAAALLLYFWRDWWALFSGVIGFAPAHHVPQARRIFMLLVVATLPAIVVGGLLEHMLRALFESAPIAAFFLVVNGGLLLFGEKLRGAASPYPQTSDHEVTERRALSTLTVMDAFTIGCWQCAALIPGISRSGATIVGGLLRGIDHEASAHFSFLIALPIILGATVLEVPKLLHADIAPGVFQTAALAAVAAGITAWLSTAFLMRYFRDHDSWALKPFAFYCIIAGLGALAWLHFA</sequence>
<keyword id="KW-0046">Antibiotic resistance</keyword>
<keyword id="KW-0997">Cell inner membrane</keyword>
<keyword id="KW-1003">Cell membrane</keyword>
<keyword id="KW-0133">Cell shape</keyword>
<keyword id="KW-0961">Cell wall biogenesis/degradation</keyword>
<keyword id="KW-0378">Hydrolase</keyword>
<keyword id="KW-0472">Membrane</keyword>
<keyword id="KW-0573">Peptidoglycan synthesis</keyword>
<keyword id="KW-1185">Reference proteome</keyword>
<keyword id="KW-0812">Transmembrane</keyword>
<keyword id="KW-1133">Transmembrane helix</keyword>
<accession>Q0BTT3</accession>
<comment type="function">
    <text evidence="1">Catalyzes the dephosphorylation of undecaprenyl diphosphate (UPP). Confers resistance to bacitracin.</text>
</comment>
<comment type="catalytic activity">
    <reaction evidence="1">
        <text>di-trans,octa-cis-undecaprenyl diphosphate + H2O = di-trans,octa-cis-undecaprenyl phosphate + phosphate + H(+)</text>
        <dbReference type="Rhea" id="RHEA:28094"/>
        <dbReference type="ChEBI" id="CHEBI:15377"/>
        <dbReference type="ChEBI" id="CHEBI:15378"/>
        <dbReference type="ChEBI" id="CHEBI:43474"/>
        <dbReference type="ChEBI" id="CHEBI:58405"/>
        <dbReference type="ChEBI" id="CHEBI:60392"/>
        <dbReference type="EC" id="3.6.1.27"/>
    </reaction>
</comment>
<comment type="subcellular location">
    <subcellularLocation>
        <location evidence="1">Cell inner membrane</location>
        <topology evidence="1">Multi-pass membrane protein</topology>
    </subcellularLocation>
</comment>
<comment type="miscellaneous">
    <text>Bacitracin is thought to be involved in the inhibition of peptidoglycan synthesis by sequestering undecaprenyl diphosphate, thereby reducing the pool of lipid carrier available.</text>
</comment>
<comment type="similarity">
    <text evidence="1">Belongs to the UppP family.</text>
</comment>
<gene>
    <name evidence="1" type="primary">uppP</name>
    <name type="ordered locus">GbCGDNIH1_0871</name>
</gene>
<reference key="1">
    <citation type="journal article" date="2007" name="J. Bacteriol.">
        <title>Genome sequence analysis of the emerging human pathogenic acetic acid bacterium Granulibacter bethesdensis.</title>
        <authorList>
            <person name="Greenberg D.E."/>
            <person name="Porcella S.F."/>
            <person name="Zelazny A.M."/>
            <person name="Virtaneva K."/>
            <person name="Sturdevant D.E."/>
            <person name="Kupko J.J. III"/>
            <person name="Barbian K.D."/>
            <person name="Babar A."/>
            <person name="Dorward D.W."/>
            <person name="Holland S.M."/>
        </authorList>
    </citation>
    <scope>NUCLEOTIDE SEQUENCE [LARGE SCALE GENOMIC DNA]</scope>
    <source>
        <strain>ATCC BAA-1260 / CGDNIH1</strain>
    </source>
</reference>
<protein>
    <recommendedName>
        <fullName evidence="1">Undecaprenyl-diphosphatase</fullName>
        <ecNumber evidence="1">3.6.1.27</ecNumber>
    </recommendedName>
    <alternativeName>
        <fullName evidence="1">Bacitracin resistance protein</fullName>
    </alternativeName>
    <alternativeName>
        <fullName evidence="1">Undecaprenyl pyrophosphate phosphatase</fullName>
    </alternativeName>
</protein>
<proteinExistence type="inferred from homology"/>
<organism>
    <name type="scientific">Granulibacter bethesdensis (strain ATCC BAA-1260 / CGDNIH1)</name>
    <dbReference type="NCBI Taxonomy" id="391165"/>
    <lineage>
        <taxon>Bacteria</taxon>
        <taxon>Pseudomonadati</taxon>
        <taxon>Pseudomonadota</taxon>
        <taxon>Alphaproteobacteria</taxon>
        <taxon>Acetobacterales</taxon>
        <taxon>Acetobacteraceae</taxon>
        <taxon>Granulibacter</taxon>
    </lineage>
</organism>
<name>UPPP_GRABC</name>
<evidence type="ECO:0000255" key="1">
    <source>
        <dbReference type="HAMAP-Rule" id="MF_01006"/>
    </source>
</evidence>